<proteinExistence type="inferred from homology"/>
<accession>A3MSA1</accession>
<evidence type="ECO:0000255" key="1">
    <source>
        <dbReference type="HAMAP-Rule" id="MF_00442"/>
    </source>
</evidence>
<sequence length="708" mass="77170">MEVSELPLDARLIAVLKERGVGRLFPPQVEAVRAGIFDGRSVLLCTATASGKSLLAEVAAVKAGLEGRMALYAVPLKALAYEKLVHFSYYRGLVKVGVSTGDFDSDDRRLHEFDVVVVTYEKLDSLLRHRPNWLGLVGVVVVDEIHYLGDPRRGPVLESIVAKLRHLGLKTQFIGLSATVGNAGEVAAWLGARLVESSWRPVPLREGVYHGGVIRFSDGSMQRVNAPGDAEVALAVDAVAGGGQALVFTNSRSSTVRLAKAVAKAMEAAGLVPRGAKALAEEVLKASSSKIIGRELADLVARGVAFHNAGLELEVRRLVEDGFRRGLLKVVVSTTTLAAGVNLPARRVVVADYERFDPALGREEIPVLEYRQMAGRAGRPGLDPYGEAVLVARSKGEAEYLMERYVRGQVEGVRSHILAEPNLRAHVLGAVGGGYAKSLDDLVDFFSNTLGAAQMKTSLKLSILRSKIGGVVEELVEWGFLERDGDFVYATELGRQVARLYLDPEVAAGYIRLIKSLRAGNVPAYLYVVLTAPDFPRVRRGRADKRVVEGILAALDVEEDEEFEDLARTASMLMAWIEEVDEDVIYEKFDVAPGDLRVYVDLFQWLGNAAAKLARLVGREEHGKRLEVVTARVVYGVREELLGLVTSLRGVGRVRARTLYNFGYRTLEDIARATVREIASLPGFGEKLAESVIEQARQMLAEGLRGEV</sequence>
<organism>
    <name type="scientific">Pyrobaculum calidifontis (strain DSM 21063 / JCM 11548 / VA1)</name>
    <dbReference type="NCBI Taxonomy" id="410359"/>
    <lineage>
        <taxon>Archaea</taxon>
        <taxon>Thermoproteota</taxon>
        <taxon>Thermoprotei</taxon>
        <taxon>Thermoproteales</taxon>
        <taxon>Thermoproteaceae</taxon>
        <taxon>Pyrobaculum</taxon>
    </lineage>
</organism>
<gene>
    <name evidence="1" type="primary">hel308</name>
    <name type="ordered locus">Pcal_0078</name>
</gene>
<dbReference type="EC" id="5.6.2.4" evidence="1"/>
<dbReference type="EMBL" id="CP000561">
    <property type="protein sequence ID" value="ABO07518.1"/>
    <property type="molecule type" value="Genomic_DNA"/>
</dbReference>
<dbReference type="RefSeq" id="WP_011848775.1">
    <property type="nucleotide sequence ID" value="NC_009073.1"/>
</dbReference>
<dbReference type="SMR" id="A3MSA1"/>
<dbReference type="STRING" id="410359.Pcal_0078"/>
<dbReference type="GeneID" id="4909721"/>
<dbReference type="KEGG" id="pcl:Pcal_0078"/>
<dbReference type="eggNOG" id="arCOG00553">
    <property type="taxonomic scope" value="Archaea"/>
</dbReference>
<dbReference type="HOGENOM" id="CLU_006553_3_0_2"/>
<dbReference type="OrthoDB" id="371946at2157"/>
<dbReference type="Proteomes" id="UP000001431">
    <property type="component" value="Chromosome"/>
</dbReference>
<dbReference type="GO" id="GO:0043138">
    <property type="term" value="F:3'-5' DNA helicase activity"/>
    <property type="evidence" value="ECO:0007669"/>
    <property type="project" value="UniProtKB-UniRule"/>
</dbReference>
<dbReference type="GO" id="GO:0005524">
    <property type="term" value="F:ATP binding"/>
    <property type="evidence" value="ECO:0007669"/>
    <property type="project" value="UniProtKB-UniRule"/>
</dbReference>
<dbReference type="GO" id="GO:0016887">
    <property type="term" value="F:ATP hydrolysis activity"/>
    <property type="evidence" value="ECO:0007669"/>
    <property type="project" value="RHEA"/>
</dbReference>
<dbReference type="GO" id="GO:0003677">
    <property type="term" value="F:DNA binding"/>
    <property type="evidence" value="ECO:0007669"/>
    <property type="project" value="UniProtKB-UniRule"/>
</dbReference>
<dbReference type="GO" id="GO:0006281">
    <property type="term" value="P:DNA repair"/>
    <property type="evidence" value="ECO:0007669"/>
    <property type="project" value="UniProtKB-UniRule"/>
</dbReference>
<dbReference type="CDD" id="cd18028">
    <property type="entry name" value="DEXHc_archSki2"/>
    <property type="match status" value="1"/>
</dbReference>
<dbReference type="CDD" id="cd18795">
    <property type="entry name" value="SF2_C_Ski2"/>
    <property type="match status" value="1"/>
</dbReference>
<dbReference type="FunFam" id="3.40.50.300:FF:003787">
    <property type="entry name" value="ATP-dependent DNA helicase Hel308"/>
    <property type="match status" value="1"/>
</dbReference>
<dbReference type="Gene3D" id="1.10.3380.30">
    <property type="match status" value="1"/>
</dbReference>
<dbReference type="Gene3D" id="1.10.150.20">
    <property type="entry name" value="5' to 3' exonuclease, C-terminal subdomain"/>
    <property type="match status" value="1"/>
</dbReference>
<dbReference type="Gene3D" id="3.40.50.300">
    <property type="entry name" value="P-loop containing nucleotide triphosphate hydrolases"/>
    <property type="match status" value="2"/>
</dbReference>
<dbReference type="HAMAP" id="MF_00442">
    <property type="entry name" value="Helicase_Hel308"/>
    <property type="match status" value="1"/>
</dbReference>
<dbReference type="InterPro" id="IPR011545">
    <property type="entry name" value="DEAD/DEAH_box_helicase_dom"/>
</dbReference>
<dbReference type="InterPro" id="IPR048772">
    <property type="entry name" value="Hel308-like_dom4"/>
</dbReference>
<dbReference type="InterPro" id="IPR050474">
    <property type="entry name" value="Hel308_SKI2-like"/>
</dbReference>
<dbReference type="InterPro" id="IPR014001">
    <property type="entry name" value="Helicase_ATP-bd"/>
</dbReference>
<dbReference type="InterPro" id="IPR001650">
    <property type="entry name" value="Helicase_C-like"/>
</dbReference>
<dbReference type="InterPro" id="IPR022965">
    <property type="entry name" value="Helicase_Hel308"/>
</dbReference>
<dbReference type="InterPro" id="IPR003583">
    <property type="entry name" value="Hlx-hairpin-Hlx_DNA-bd_motif"/>
</dbReference>
<dbReference type="InterPro" id="IPR027417">
    <property type="entry name" value="P-loop_NTPase"/>
</dbReference>
<dbReference type="InterPro" id="IPR036390">
    <property type="entry name" value="WH_DNA-bd_sf"/>
</dbReference>
<dbReference type="PANTHER" id="PTHR47961:SF10">
    <property type="entry name" value="ATP-DEPENDENT DNA HELICASE HEL308"/>
    <property type="match status" value="1"/>
</dbReference>
<dbReference type="PANTHER" id="PTHR47961">
    <property type="entry name" value="DNA POLYMERASE THETA, PUTATIVE (AFU_ORTHOLOGUE AFUA_1G05260)-RELATED"/>
    <property type="match status" value="1"/>
</dbReference>
<dbReference type="Pfam" id="PF00270">
    <property type="entry name" value="DEAD"/>
    <property type="match status" value="1"/>
</dbReference>
<dbReference type="Pfam" id="PF00271">
    <property type="entry name" value="Helicase_C"/>
    <property type="match status" value="1"/>
</dbReference>
<dbReference type="Pfam" id="PF21280">
    <property type="entry name" value="Helicase_dom4_arc"/>
    <property type="match status" value="1"/>
</dbReference>
<dbReference type="Pfam" id="PF14520">
    <property type="entry name" value="HHH_5"/>
    <property type="match status" value="1"/>
</dbReference>
<dbReference type="SMART" id="SM00487">
    <property type="entry name" value="DEXDc"/>
    <property type="match status" value="1"/>
</dbReference>
<dbReference type="SMART" id="SM00490">
    <property type="entry name" value="HELICc"/>
    <property type="match status" value="1"/>
</dbReference>
<dbReference type="SMART" id="SM00278">
    <property type="entry name" value="HhH1"/>
    <property type="match status" value="2"/>
</dbReference>
<dbReference type="SUPFAM" id="SSF52540">
    <property type="entry name" value="P-loop containing nucleoside triphosphate hydrolases"/>
    <property type="match status" value="1"/>
</dbReference>
<dbReference type="SUPFAM" id="SSF158702">
    <property type="entry name" value="Sec63 N-terminal domain-like"/>
    <property type="match status" value="1"/>
</dbReference>
<dbReference type="SUPFAM" id="SSF46785">
    <property type="entry name" value="Winged helix' DNA-binding domain"/>
    <property type="match status" value="1"/>
</dbReference>
<dbReference type="PROSITE" id="PS51192">
    <property type="entry name" value="HELICASE_ATP_BIND_1"/>
    <property type="match status" value="1"/>
</dbReference>
<dbReference type="PROSITE" id="PS51194">
    <property type="entry name" value="HELICASE_CTER"/>
    <property type="match status" value="1"/>
</dbReference>
<name>HELS_PYRCJ</name>
<keyword id="KW-0067">ATP-binding</keyword>
<keyword id="KW-0227">DNA damage</keyword>
<keyword id="KW-0234">DNA repair</keyword>
<keyword id="KW-0238">DNA-binding</keyword>
<keyword id="KW-0347">Helicase</keyword>
<keyword id="KW-0378">Hydrolase</keyword>
<keyword id="KW-0413">Isomerase</keyword>
<keyword id="KW-0547">Nucleotide-binding</keyword>
<comment type="function">
    <text evidence="1">DNA-dependent ATPase and 3'-5' DNA helicase that may be involved in repair of stalled replication forks.</text>
</comment>
<comment type="catalytic activity">
    <reaction evidence="1">
        <text>Couples ATP hydrolysis with the unwinding of duplex DNA by translocating in the 3'-5' direction.</text>
        <dbReference type="EC" id="5.6.2.4"/>
    </reaction>
</comment>
<comment type="catalytic activity">
    <reaction evidence="1">
        <text>ATP + H2O = ADP + phosphate + H(+)</text>
        <dbReference type="Rhea" id="RHEA:13065"/>
        <dbReference type="ChEBI" id="CHEBI:15377"/>
        <dbReference type="ChEBI" id="CHEBI:15378"/>
        <dbReference type="ChEBI" id="CHEBI:30616"/>
        <dbReference type="ChEBI" id="CHEBI:43474"/>
        <dbReference type="ChEBI" id="CHEBI:456216"/>
        <dbReference type="EC" id="5.6.2.4"/>
    </reaction>
</comment>
<comment type="subunit">
    <text evidence="1">Monomer.</text>
</comment>
<comment type="similarity">
    <text evidence="1">Belongs to the helicase family. Hel308 subfamily.</text>
</comment>
<feature type="chain" id="PRO_1000124585" description="ATP-dependent DNA helicase Hel308">
    <location>
        <begin position="1"/>
        <end position="708"/>
    </location>
</feature>
<feature type="domain" description="Helicase ATP-binding" evidence="1">
    <location>
        <begin position="33"/>
        <end position="198"/>
    </location>
</feature>
<feature type="domain" description="Helicase C-terminal" evidence="1">
    <location>
        <begin position="231"/>
        <end position="429"/>
    </location>
</feature>
<feature type="short sequence motif" description="DEAH box" evidence="1">
    <location>
        <begin position="143"/>
        <end position="146"/>
    </location>
</feature>
<feature type="binding site" evidence="1">
    <location>
        <position position="28"/>
    </location>
    <ligand>
        <name>ATP</name>
        <dbReference type="ChEBI" id="CHEBI:30616"/>
    </ligand>
</feature>
<feature type="binding site" evidence="1">
    <location>
        <begin position="46"/>
        <end position="53"/>
    </location>
    <ligand>
        <name>ATP</name>
        <dbReference type="ChEBI" id="CHEBI:30616"/>
    </ligand>
</feature>
<protein>
    <recommendedName>
        <fullName evidence="1">ATP-dependent DNA helicase Hel308</fullName>
        <ecNumber evidence="1">5.6.2.4</ecNumber>
    </recommendedName>
    <alternativeName>
        <fullName evidence="1">DNA 3'-5' helicase Hel308</fullName>
    </alternativeName>
</protein>
<reference key="1">
    <citation type="submission" date="2007-02" db="EMBL/GenBank/DDBJ databases">
        <title>Complete sequence of Pyrobaculum calidifontis JCM 11548.</title>
        <authorList>
            <consortium name="US DOE Joint Genome Institute"/>
            <person name="Copeland A."/>
            <person name="Lucas S."/>
            <person name="Lapidus A."/>
            <person name="Barry K."/>
            <person name="Glavina del Rio T."/>
            <person name="Dalin E."/>
            <person name="Tice H."/>
            <person name="Pitluck S."/>
            <person name="Chain P."/>
            <person name="Malfatti S."/>
            <person name="Shin M."/>
            <person name="Vergez L."/>
            <person name="Schmutz J."/>
            <person name="Larimer F."/>
            <person name="Land M."/>
            <person name="Hauser L."/>
            <person name="Kyrpides N."/>
            <person name="Mikhailova N."/>
            <person name="Cozen A.E."/>
            <person name="Fitz-Gibbon S.T."/>
            <person name="House C.H."/>
            <person name="Saltikov C."/>
            <person name="Lowe T.M."/>
            <person name="Richardson P."/>
        </authorList>
    </citation>
    <scope>NUCLEOTIDE SEQUENCE [LARGE SCALE GENOMIC DNA]</scope>
    <source>
        <strain>DSM 21063 / JCM 11548 / VA1</strain>
    </source>
</reference>